<gene>
    <name type="ordered locus">MJECL04</name>
</gene>
<organism>
    <name type="scientific">Methanocaldococcus jannaschii (strain ATCC 43067 / DSM 2661 / JAL-1 / JCM 10045 / NBRC 100440)</name>
    <name type="common">Methanococcus jannaschii</name>
    <dbReference type="NCBI Taxonomy" id="243232"/>
    <lineage>
        <taxon>Archaea</taxon>
        <taxon>Methanobacteriati</taxon>
        <taxon>Methanobacteriota</taxon>
        <taxon>Methanomada group</taxon>
        <taxon>Methanococci</taxon>
        <taxon>Methanococcales</taxon>
        <taxon>Methanocaldococcaceae</taxon>
        <taxon>Methanocaldococcus</taxon>
    </lineage>
</organism>
<sequence length="439" mass="52422">MFVDREEELKALNEKLDSNNFEFIVIYGRRRIGKTKLALKSVENREHIYYLAVEGDNLKHFKRYASKVEPTIEYAKEDWEAYFNFLKDKIIIIDEFPNLIKENPNVLSLFQRIVDIHLKNTKTKLIILGSSISMMGEKVLSYKSPLYGRKTGVLKIKPLKFKHLKEFFPKAIWEELVEIYGFADGIPYYLEKVKLPFWDYLDKEIKRVDSFLRYEVDFLMKYEFEEPTTYKKILEAIAFGNHTLGEIKNYLGFKHSDLTPYLKNLIEVEFIERQTPITESVKSKKGRYYIKDNFIAFYFRYIFPNLSAIEEGIFDIEEIKADYNQYLGFVFEKVAKEFLIELNKMNKLPFKFLKIGRWWHRGEEIDLIALNDNDKKALFVEVKWKDLKDRDVKKIYRDLYRKSKLVGLDDYEKYYAIVGKKIESKENGDCLLFDLEDFS</sequence>
<dbReference type="EMBL" id="L77118">
    <property type="protein sequence ID" value="AAC37078.1"/>
    <property type="molecule type" value="Genomic_DNA"/>
</dbReference>
<dbReference type="PIR" id="D64510">
    <property type="entry name" value="D64510"/>
</dbReference>
<dbReference type="RefSeq" id="WP_010890051.1">
    <property type="nucleotide sequence ID" value="NC_001732.1"/>
</dbReference>
<dbReference type="SMR" id="Q60260"/>
<dbReference type="PaxDb" id="243232-MJ_ECL04"/>
<dbReference type="DNASU" id="1450791"/>
<dbReference type="EnsemblBacteria" id="AAC37078">
    <property type="protein sequence ID" value="AAC37078"/>
    <property type="gene ID" value="MJ_ECL04"/>
</dbReference>
<dbReference type="GeneID" id="1450791"/>
<dbReference type="KEGG" id="mja:MJ_ECL04"/>
<dbReference type="eggNOG" id="arCOG03166">
    <property type="taxonomic scope" value="Archaea"/>
</dbReference>
<dbReference type="HOGENOM" id="CLU_041137_3_0_2"/>
<dbReference type="InParanoid" id="Q60260"/>
<dbReference type="OrthoDB" id="132045at2157"/>
<dbReference type="PhylomeDB" id="Q60260"/>
<dbReference type="Proteomes" id="UP000000805">
    <property type="component" value="Plasmid pDSM2661_1"/>
</dbReference>
<dbReference type="GO" id="GO:0005524">
    <property type="term" value="F:ATP binding"/>
    <property type="evidence" value="ECO:0007669"/>
    <property type="project" value="UniProtKB-KW"/>
</dbReference>
<dbReference type="Gene3D" id="3.40.50.300">
    <property type="entry name" value="P-loop containing nucleotide triphosphate hydrolases"/>
    <property type="match status" value="1"/>
</dbReference>
<dbReference type="Gene3D" id="1.10.10.10">
    <property type="entry name" value="Winged helix-like DNA-binding domain superfamily/Winged helix DNA-binding domain"/>
    <property type="match status" value="1"/>
</dbReference>
<dbReference type="InterPro" id="IPR011579">
    <property type="entry name" value="ATPase_dom"/>
</dbReference>
<dbReference type="InterPro" id="IPR004256">
    <property type="entry name" value="DUF234"/>
</dbReference>
<dbReference type="InterPro" id="IPR027417">
    <property type="entry name" value="P-loop_NTPase"/>
</dbReference>
<dbReference type="InterPro" id="IPR011335">
    <property type="entry name" value="Restrct_endonuc-II-like"/>
</dbReference>
<dbReference type="InterPro" id="IPR036388">
    <property type="entry name" value="WH-like_DNA-bd_sf"/>
</dbReference>
<dbReference type="InterPro" id="IPR036390">
    <property type="entry name" value="WH_DNA-bd_sf"/>
</dbReference>
<dbReference type="PANTHER" id="PTHR34704">
    <property type="entry name" value="ATPASE"/>
    <property type="match status" value="1"/>
</dbReference>
<dbReference type="PANTHER" id="PTHR34704:SF1">
    <property type="entry name" value="ATPASE"/>
    <property type="match status" value="1"/>
</dbReference>
<dbReference type="Pfam" id="PF01637">
    <property type="entry name" value="ATPase_2"/>
    <property type="match status" value="1"/>
</dbReference>
<dbReference type="Pfam" id="PF03008">
    <property type="entry name" value="DUF234"/>
    <property type="match status" value="1"/>
</dbReference>
<dbReference type="SUPFAM" id="SSF52540">
    <property type="entry name" value="P-loop containing nucleoside triphosphate hydrolases"/>
    <property type="match status" value="1"/>
</dbReference>
<dbReference type="SUPFAM" id="SSF52980">
    <property type="entry name" value="Restriction endonuclease-like"/>
    <property type="match status" value="1"/>
</dbReference>
<dbReference type="SUPFAM" id="SSF46785">
    <property type="entry name" value="Winged helix' DNA-binding domain"/>
    <property type="match status" value="1"/>
</dbReference>
<geneLocation type="plasmid">
    <name>large ECE</name>
</geneLocation>
<name>Y3504_METJA</name>
<feature type="chain" id="PRO_0000107496" description="Uncharacterized protein MJECL04">
    <location>
        <begin position="1"/>
        <end position="439"/>
    </location>
</feature>
<feature type="binding site" evidence="1">
    <location>
        <begin position="28"/>
        <end position="35"/>
    </location>
    <ligand>
        <name>ATP</name>
        <dbReference type="ChEBI" id="CHEBI:30616"/>
    </ligand>
</feature>
<reference key="1">
    <citation type="journal article" date="1996" name="Science">
        <title>Complete genome sequence of the methanogenic archaeon, Methanococcus jannaschii.</title>
        <authorList>
            <person name="Bult C.J."/>
            <person name="White O."/>
            <person name="Olsen G.J."/>
            <person name="Zhou L."/>
            <person name="Fleischmann R.D."/>
            <person name="Sutton G.G."/>
            <person name="Blake J.A."/>
            <person name="FitzGerald L.M."/>
            <person name="Clayton R.A."/>
            <person name="Gocayne J.D."/>
            <person name="Kerlavage A.R."/>
            <person name="Dougherty B.A."/>
            <person name="Tomb J.-F."/>
            <person name="Adams M.D."/>
            <person name="Reich C.I."/>
            <person name="Overbeek R."/>
            <person name="Kirkness E.F."/>
            <person name="Weinstock K.G."/>
            <person name="Merrick J.M."/>
            <person name="Glodek A."/>
            <person name="Scott J.L."/>
            <person name="Geoghagen N.S.M."/>
            <person name="Weidman J.F."/>
            <person name="Fuhrmann J.L."/>
            <person name="Nguyen D."/>
            <person name="Utterback T.R."/>
            <person name="Kelley J.M."/>
            <person name="Peterson J.D."/>
            <person name="Sadow P.W."/>
            <person name="Hanna M.C."/>
            <person name="Cotton M.D."/>
            <person name="Roberts K.M."/>
            <person name="Hurst M.A."/>
            <person name="Kaine B.P."/>
            <person name="Borodovsky M."/>
            <person name="Klenk H.-P."/>
            <person name="Fraser C.M."/>
            <person name="Smith H.O."/>
            <person name="Woese C.R."/>
            <person name="Venter J.C."/>
        </authorList>
    </citation>
    <scope>NUCLEOTIDE SEQUENCE [LARGE SCALE GENOMIC DNA]</scope>
    <source>
        <strain>ATCC 43067 / DSM 2661 / JAL-1 / JCM 10045 / NBRC 100440</strain>
    </source>
</reference>
<protein>
    <recommendedName>
        <fullName>Uncharacterized protein MJECL04</fullName>
    </recommendedName>
</protein>
<accession>Q60260</accession>
<evidence type="ECO:0000255" key="1"/>
<proteinExistence type="predicted"/>
<keyword id="KW-0067">ATP-binding</keyword>
<keyword id="KW-0547">Nucleotide-binding</keyword>
<keyword id="KW-0614">Plasmid</keyword>
<keyword id="KW-1185">Reference proteome</keyword>